<reference key="1">
    <citation type="journal article" date="1991" name="Biochim. Biophys. Acta">
        <title>The nucleotide sequence of a voltage-gated chloride channel from the electric organ of Torpedo californica.</title>
        <authorList>
            <person name="O'Neill G.P."/>
            <person name="Grygorczyk R."/>
            <person name="Adam M."/>
            <person name="Ford-Hutchinson A.W."/>
        </authorList>
    </citation>
    <scope>NUCLEOTIDE SEQUENCE [MRNA]</scope>
    <source>
        <tissue>Electric organ</tissue>
    </source>
</reference>
<reference key="2">
    <citation type="journal article" date="1994" name="Biochemistry">
        <title>Purification, reconstitution, and subunit composition of a voltage-gated chloride channel from Torpedo electroplax.</title>
        <authorList>
            <person name="Middleton R.E."/>
            <person name="Pheasant D.J."/>
            <person name="Miller C."/>
        </authorList>
    </citation>
    <scope>PROTEIN SEQUENCE OF 2-11</scope>
    <scope>CHARACTERIZATION</scope>
    <source>
        <tissue>Electric organ</tissue>
    </source>
</reference>
<reference key="3">
    <citation type="journal article" date="2003" name="Science">
        <title>Gating the selectivity filter in ClC chloride channels.</title>
        <authorList>
            <person name="Dutzler R."/>
            <person name="Campbell E.B."/>
            <person name="MacKinnon R."/>
        </authorList>
    </citation>
    <scope>CHARACTERIZATION</scope>
    <scope>MUTAGENESIS OF GLU-166</scope>
</reference>
<proteinExistence type="evidence at protein level"/>
<comment type="function">
    <text>Voltage-gated chloride channel. This channel is thought to ensure the high conductance of the non-innervated membrane of the electrocyte necessary for efficient current generation caused by sodium influx through the acetylcholine receptor at the innervated membrane.</text>
</comment>
<comment type="subunit">
    <text>Homodimer. Each subunit has channel activity ('Double barreled channel').</text>
</comment>
<comment type="subcellular location">
    <subcellularLocation>
        <location>Membrane</location>
        <topology>Multi-pass membrane protein</topology>
    </subcellularLocation>
</comment>
<comment type="miscellaneous">
    <text evidence="1">The CLC channel family contains both chloride channels and proton-coupled anion transporters that exchange chloride or another anion for protons. The absence of conserved gating glutamate residues is typical for family members that function as channels (By similarity).</text>
</comment>
<comment type="similarity">
    <text evidence="6">Belongs to the chloride channel (TC 2.A.49) family. ClC-0 subfamily.</text>
</comment>
<accession>P35522</accession>
<protein>
    <recommendedName>
        <fullName>Chloride channel protein</fullName>
    </recommendedName>
    <alternativeName>
        <fullName>ClC-0</fullName>
    </alternativeName>
</protein>
<keyword id="KW-0129">CBS domain</keyword>
<keyword id="KW-0868">Chloride</keyword>
<keyword id="KW-0869">Chloride channel</keyword>
<keyword id="KW-0903">Direct protein sequencing</keyword>
<keyword id="KW-0325">Glycoprotein</keyword>
<keyword id="KW-0407">Ion channel</keyword>
<keyword id="KW-0406">Ion transport</keyword>
<keyword id="KW-0472">Membrane</keyword>
<keyword id="KW-0677">Repeat</keyword>
<keyword id="KW-0812">Transmembrane</keyword>
<keyword id="KW-1133">Transmembrane helix</keyword>
<keyword id="KW-0813">Transport</keyword>
<keyword id="KW-0851">Voltage-gated channel</keyword>
<name>CICH_TETCF</name>
<feature type="initiator methionine" description="Removed" evidence="5">
    <location>
        <position position="1"/>
    </location>
</feature>
<feature type="chain" id="PRO_0000094463" description="Chloride channel protein">
    <location>
        <begin position="2"/>
        <end position="810"/>
    </location>
</feature>
<feature type="topological domain" description="Cytoplasmic" evidence="1">
    <location>
        <begin position="2"/>
        <end position="48"/>
    </location>
</feature>
<feature type="transmembrane region" description="Helical" evidence="1">
    <location>
        <begin position="49"/>
        <end position="86"/>
    </location>
</feature>
<feature type="transmembrane region" description="Helical" evidence="1">
    <location>
        <begin position="93"/>
        <end position="116"/>
    </location>
</feature>
<feature type="intramembrane region" description="Helical" evidence="1">
    <location>
        <begin position="125"/>
        <end position="132"/>
    </location>
</feature>
<feature type="transmembrane region" description="Helical" evidence="1">
    <location>
        <begin position="141"/>
        <end position="160"/>
    </location>
</feature>
<feature type="transmembrane region" description="Helical" evidence="1">
    <location>
        <begin position="166"/>
        <end position="184"/>
    </location>
</feature>
<feature type="intramembrane region" description="Helical" evidence="1">
    <location>
        <begin position="201"/>
        <end position="213"/>
    </location>
</feature>
<feature type="intramembrane region" description="Helical" evidence="1">
    <location>
        <begin position="217"/>
        <end position="225"/>
    </location>
</feature>
<feature type="transmembrane region" description="Helical" evidence="1">
    <location>
        <begin position="237"/>
        <end position="254"/>
    </location>
</feature>
<feature type="transmembrane region" description="Helical" evidence="1">
    <location>
        <begin position="283"/>
        <end position="311"/>
    </location>
</feature>
<feature type="transmembrane region" description="Helical" evidence="1">
    <location>
        <begin position="320"/>
        <end position="339"/>
    </location>
</feature>
<feature type="transmembrane region" description="Helical" evidence="1">
    <location>
        <begin position="389"/>
        <end position="408"/>
    </location>
</feature>
<feature type="transmembrane region" description="Helical" evidence="1">
    <location>
        <begin position="416"/>
        <end position="439"/>
    </location>
</feature>
<feature type="intramembrane region" description="Helical" evidence="1">
    <location>
        <begin position="456"/>
        <end position="470"/>
    </location>
</feature>
<feature type="intramembrane region" description="Note=Loop between two helices" evidence="1">
    <location>
        <begin position="471"/>
        <end position="472"/>
    </location>
</feature>
<feature type="intramembrane region" description="Helical" evidence="1">
    <location>
        <begin position="473"/>
        <end position="484"/>
    </location>
</feature>
<feature type="intramembrane region" description="Note=Loop between two helices" evidence="1">
    <location>
        <begin position="485"/>
        <end position="489"/>
    </location>
</feature>
<feature type="transmembrane region" description="Helical" evidence="1">
    <location>
        <begin position="490"/>
        <end position="506"/>
    </location>
</feature>
<feature type="topological domain" description="Cytoplasmic" evidence="1">
    <location>
        <begin position="507"/>
        <end position="810"/>
    </location>
</feature>
<feature type="domain" description="CBS 1" evidence="2">
    <location>
        <begin position="543"/>
        <end position="601"/>
    </location>
</feature>
<feature type="domain" description="CBS 2" evidence="2">
    <location>
        <begin position="724"/>
        <end position="781"/>
    </location>
</feature>
<feature type="region of interest" description="Disordered" evidence="3">
    <location>
        <begin position="604"/>
        <end position="631"/>
    </location>
</feature>
<feature type="region of interest" description="Disordered" evidence="3">
    <location>
        <begin position="658"/>
        <end position="688"/>
    </location>
</feature>
<feature type="short sequence motif" description="Selectivity filter part_1" evidence="1">
    <location>
        <begin position="122"/>
        <end position="126"/>
    </location>
</feature>
<feature type="short sequence motif" description="Selectivity filter part_2" evidence="1">
    <location>
        <begin position="164"/>
        <end position="168"/>
    </location>
</feature>
<feature type="short sequence motif" description="Selectivity filter part_3" evidence="1">
    <location>
        <begin position="416"/>
        <end position="420"/>
    </location>
</feature>
<feature type="binding site" evidence="1">
    <location>
        <position position="123"/>
    </location>
    <ligand>
        <name>chloride</name>
        <dbReference type="ChEBI" id="CHEBI:17996"/>
    </ligand>
</feature>
<feature type="binding site" evidence="1">
    <location>
        <position position="418"/>
    </location>
    <ligand>
        <name>chloride</name>
        <dbReference type="ChEBI" id="CHEBI:17996"/>
    </ligand>
</feature>
<feature type="binding site" evidence="1">
    <location>
        <position position="512"/>
    </location>
    <ligand>
        <name>chloride</name>
        <dbReference type="ChEBI" id="CHEBI:17996"/>
    </ligand>
</feature>
<feature type="site" description="Gate">
    <location>
        <position position="166"/>
    </location>
</feature>
<feature type="glycosylation site" description="N-linked (GlcNAc...) asparagine">
    <location>
        <position position="365"/>
    </location>
</feature>
<feature type="mutagenesis site" description="Gating function is lost. The channel is always open." evidence="4">
    <original>E</original>
    <variation>A</variation>
    <variation>Q</variation>
    <variation>V</variation>
    <location>
        <position position="166"/>
    </location>
</feature>
<dbReference type="EMBL" id="X60433">
    <property type="protein sequence ID" value="CAA42960.1"/>
    <property type="molecule type" value="mRNA"/>
</dbReference>
<dbReference type="PIR" id="S19725">
    <property type="entry name" value="S19725"/>
</dbReference>
<dbReference type="SMR" id="P35522"/>
<dbReference type="DIP" id="DIP-29258N"/>
<dbReference type="TCDB" id="2.A.49.2.11">
    <property type="family name" value="the chloride carrier/channel (clc) family"/>
</dbReference>
<dbReference type="GO" id="GO:0034707">
    <property type="term" value="C:chloride channel complex"/>
    <property type="evidence" value="ECO:0007669"/>
    <property type="project" value="UniProtKB-KW"/>
</dbReference>
<dbReference type="GO" id="GO:0005886">
    <property type="term" value="C:plasma membrane"/>
    <property type="evidence" value="ECO:0007669"/>
    <property type="project" value="TreeGrafter"/>
</dbReference>
<dbReference type="GO" id="GO:0005247">
    <property type="term" value="F:voltage-gated chloride channel activity"/>
    <property type="evidence" value="ECO:0007669"/>
    <property type="project" value="InterPro"/>
</dbReference>
<dbReference type="CDD" id="cd04591">
    <property type="entry name" value="CBS_pair_voltage-gated_CLC_euk_bac"/>
    <property type="match status" value="1"/>
</dbReference>
<dbReference type="CDD" id="cd03683">
    <property type="entry name" value="ClC_1_like"/>
    <property type="match status" value="1"/>
</dbReference>
<dbReference type="FunFam" id="1.10.3080.10:FF:000003">
    <property type="entry name" value="Chloride channel 2"/>
    <property type="match status" value="1"/>
</dbReference>
<dbReference type="Gene3D" id="3.10.580.10">
    <property type="entry name" value="CBS-domain"/>
    <property type="match status" value="2"/>
</dbReference>
<dbReference type="Gene3D" id="1.10.3080.10">
    <property type="entry name" value="Clc chloride channel"/>
    <property type="match status" value="1"/>
</dbReference>
<dbReference type="InterPro" id="IPR000644">
    <property type="entry name" value="CBS_dom"/>
</dbReference>
<dbReference type="InterPro" id="IPR046342">
    <property type="entry name" value="CBS_dom_sf"/>
</dbReference>
<dbReference type="InterPro" id="IPR014743">
    <property type="entry name" value="Cl-channel_core"/>
</dbReference>
<dbReference type="InterPro" id="IPR002242">
    <property type="entry name" value="Cl_channel-0"/>
</dbReference>
<dbReference type="InterPro" id="IPR050970">
    <property type="entry name" value="Cl_channel_volt-gated"/>
</dbReference>
<dbReference type="InterPro" id="IPR001807">
    <property type="entry name" value="ClC"/>
</dbReference>
<dbReference type="PANTHER" id="PTHR45720:SF4">
    <property type="entry name" value="CHLORIDE CHANNEL PROTEIN 1"/>
    <property type="match status" value="1"/>
</dbReference>
<dbReference type="PANTHER" id="PTHR45720">
    <property type="entry name" value="CHLORIDE CHANNEL PROTEIN 2"/>
    <property type="match status" value="1"/>
</dbReference>
<dbReference type="Pfam" id="PF00654">
    <property type="entry name" value="Voltage_CLC"/>
    <property type="match status" value="1"/>
</dbReference>
<dbReference type="PRINTS" id="PR00762">
    <property type="entry name" value="CLCHANNEL"/>
</dbReference>
<dbReference type="PRINTS" id="PR01111">
    <property type="entry name" value="CLCHANNEL0"/>
</dbReference>
<dbReference type="SUPFAM" id="SSF54631">
    <property type="entry name" value="CBS-domain pair"/>
    <property type="match status" value="1"/>
</dbReference>
<dbReference type="SUPFAM" id="SSF81340">
    <property type="entry name" value="Clc chloride channel"/>
    <property type="match status" value="1"/>
</dbReference>
<dbReference type="PROSITE" id="PS51371">
    <property type="entry name" value="CBS"/>
    <property type="match status" value="2"/>
</dbReference>
<sequence length="810" mass="89447">MSHEKNEASGNPEAQSWKAQEAMLGVKTEVSRWRAVKNCLYRHLVKVLGEDWIFLLLLGALMALVSWAMDFIGSRGLRFYKYLFAMVEGNLGLQYLVWVCYPLILILFSSLFCQIVSPQAVGSGIPELKTIIRGAVLHEYLTLRTFVAKTVGLTVALSAGFPLGKEGPFVHIASICATLLNQLLCFISGRREEPYYLRADILTVGCALGISCCFGTPLAGVLFSIEVTCSHFGVRSYWRGFLGGAFSAFIFRVLSVWVKDTVTLTALFKTNFRGDIPFDLQELPAFAIIGIASGFFGALFVYLNRQIIVFMRKKNFVTKILKKQRLIYPAVVTFVLATLRFPPGVGQFFGAGLMPRETINSLFDNYTWTKTIDPRGLGNSAQWFIPHLNIFIVMALYFVMHFWMAALAVTMPVPCGAFVPVFNLGAVLGRFVGELMALLFPDGLVSNGNLYHILPGEYAVIGAAAMTGAVTHAVSTAVICFELTGQISHVLPMMVAVILANMVAQGLQPSLYDSIIQIKKLPYLPELSWSSANKYNIQVGDIMVRDVTSIASTSTYGDLLHVLRQTKLKFFPFVDTPETNTLLGSIERTEVEGLLQRRISAYRRQPATAAEAEEEGRNGERGASFTGDVPGEAETSFAYIDQEEAEGQQQREGLEAVKVQTEDPRPPSPVPAEEPTQTSGIYQKKHKGTGQVASRFEEMLTLEEIYQWEQREKNVVVNFETCRIDQSPFQLVEGTSLQKTHTLFSLLGLDRAYVTSMGKLVGVVALAEIQAAIEGSYQKGFRLPPPLASFRDAKNARNSGRTATSNSSGK</sequence>
<evidence type="ECO:0000250" key="1"/>
<evidence type="ECO:0000255" key="2">
    <source>
        <dbReference type="PROSITE-ProRule" id="PRU00703"/>
    </source>
</evidence>
<evidence type="ECO:0000256" key="3">
    <source>
        <dbReference type="SAM" id="MobiDB-lite"/>
    </source>
</evidence>
<evidence type="ECO:0000269" key="4">
    <source>
    </source>
</evidence>
<evidence type="ECO:0000269" key="5">
    <source>
    </source>
</evidence>
<evidence type="ECO:0000305" key="6"/>
<organism>
    <name type="scientific">Tetronarce californica</name>
    <name type="common">Pacific electric ray</name>
    <name type="synonym">Torpedo californica</name>
    <dbReference type="NCBI Taxonomy" id="7787"/>
    <lineage>
        <taxon>Eukaryota</taxon>
        <taxon>Metazoa</taxon>
        <taxon>Chordata</taxon>
        <taxon>Craniata</taxon>
        <taxon>Vertebrata</taxon>
        <taxon>Chondrichthyes</taxon>
        <taxon>Elasmobranchii</taxon>
        <taxon>Batoidea</taxon>
        <taxon>Torpediniformes</taxon>
        <taxon>Torpedinidae</taxon>
        <taxon>Tetronarce</taxon>
    </lineage>
</organism>